<accession>C4JTH6</accession>
<sequence>MAVKGAAKGRGPPRRKQPRFETSRVQDLDDREPLNGEQVVSEDALNEASDAEYSVSSSDNEEEEKSTDKPYNVLLQLLNASEDSIGPAKKKRKLKHKEKNVKQQTEATKEASPGKGDLDLQDDLDVKEAENTESDNEQVENDEAEGSEDEADSGSDPFEIHFSQPDEAQLSKRIEATSQKWRTSRQTLPAGMRFTAVYPDVGEEQNLHRASLHSPKDLTLKRKLSEAASVHLPQFDAPNTSVAPYLFGYYDMIYGGRTTGNAAKLRDMYCLHALNHIIKTRDRVIKNNARVPKEGEDIEIRDQGFTRPKVLIILPTRQACVRVVDSISKFYQAEQQENRKRFMETFSTADDDTWEDKTEDFRELFGGNDDDMFRLGLKFTRKTVKFFSQFYSSDIILASPLGLRTAIEKEDGKKIEYDFLSSIELVIVDHADALLMQNWDHVEYIFSHLNLQPKEAHGCDFGRVRTWYLDGNAKYLRQTLILTSFITPEINSLFSHHAYNVFGKIKIDSTYPGAILDVPVPVPVRQTFSRFDSLSPVKDPDARFKYFTSTVLSSLAKNWSSSGKSSAAGTLIFIPSYLDFVRIRNYFATSSQTTNLSFGAISEYSSPRDVARARSHFMNGRHTVMLYTERLHHFRRYKIRGVKRVVMYGVPENPVFYKEIAGFLGIDPAAVGEAAEKGVRALFSKWDALKLERIAGTKRMGSMMLEKGGDTFTFT</sequence>
<comment type="function">
    <text evidence="1">DEAD-box RNA helicase-like protein required for pre-18S rRNA processing, specifically at sites A0, A1, and A2.</text>
</comment>
<comment type="subunit">
    <text evidence="1">Component of the ribosomal small subunit (SSU) processome composed of at least 40 protein subunits and snoRNA U3.</text>
</comment>
<comment type="subcellular location">
    <subcellularLocation>
        <location evidence="1">Nucleus</location>
        <location evidence="1">Nucleolus</location>
    </subcellularLocation>
</comment>
<comment type="similarity">
    <text evidence="3">Belongs to the UTP25 family.</text>
</comment>
<keyword id="KW-0539">Nucleus</keyword>
<keyword id="KW-1185">Reference proteome</keyword>
<keyword id="KW-0687">Ribonucleoprotein</keyword>
<keyword id="KW-0690">Ribosome biogenesis</keyword>
<keyword id="KW-0698">rRNA processing</keyword>
<protein>
    <recommendedName>
        <fullName>U3 small nucleolar RNA-associated protein 25</fullName>
        <shortName>U3 snoRNA-associated protein 25</shortName>
    </recommendedName>
    <alternativeName>
        <fullName>U three protein 25</fullName>
    </alternativeName>
</protein>
<name>UTP25_UNCRE</name>
<gene>
    <name type="primary">UTP25</name>
    <name type="ORF">UREG_05765</name>
</gene>
<reference key="1">
    <citation type="journal article" date="2009" name="Genome Res.">
        <title>Comparative genomic analyses of the human fungal pathogens Coccidioides and their relatives.</title>
        <authorList>
            <person name="Sharpton T.J."/>
            <person name="Stajich J.E."/>
            <person name="Rounsley S.D."/>
            <person name="Gardner M.J."/>
            <person name="Wortman J.R."/>
            <person name="Jordar V.S."/>
            <person name="Maiti R."/>
            <person name="Kodira C.D."/>
            <person name="Neafsey D.E."/>
            <person name="Zeng Q."/>
            <person name="Hung C.-Y."/>
            <person name="McMahan C."/>
            <person name="Muszewska A."/>
            <person name="Grynberg M."/>
            <person name="Mandel M.A."/>
            <person name="Kellner E.M."/>
            <person name="Barker B.M."/>
            <person name="Galgiani J.N."/>
            <person name="Orbach M.J."/>
            <person name="Kirkland T.N."/>
            <person name="Cole G.T."/>
            <person name="Henn M.R."/>
            <person name="Birren B.W."/>
            <person name="Taylor J.W."/>
        </authorList>
    </citation>
    <scope>NUCLEOTIDE SEQUENCE [LARGE SCALE GENOMIC DNA]</scope>
    <source>
        <strain>UAMH 1704</strain>
    </source>
</reference>
<organism>
    <name type="scientific">Uncinocarpus reesii (strain UAMH 1704)</name>
    <dbReference type="NCBI Taxonomy" id="336963"/>
    <lineage>
        <taxon>Eukaryota</taxon>
        <taxon>Fungi</taxon>
        <taxon>Dikarya</taxon>
        <taxon>Ascomycota</taxon>
        <taxon>Pezizomycotina</taxon>
        <taxon>Eurotiomycetes</taxon>
        <taxon>Eurotiomycetidae</taxon>
        <taxon>Onygenales</taxon>
        <taxon>Onygenaceae</taxon>
        <taxon>Uncinocarpus</taxon>
    </lineage>
</organism>
<dbReference type="EMBL" id="CH476617">
    <property type="protein sequence ID" value="EEP80923.1"/>
    <property type="molecule type" value="Genomic_DNA"/>
</dbReference>
<dbReference type="RefSeq" id="XP_002585076.1">
    <property type="nucleotide sequence ID" value="XM_002585030.1"/>
</dbReference>
<dbReference type="FunCoup" id="C4JTH6">
    <property type="interactions" value="1097"/>
</dbReference>
<dbReference type="STRING" id="336963.C4JTH6"/>
<dbReference type="GeneID" id="8443022"/>
<dbReference type="KEGG" id="ure:UREG_05765"/>
<dbReference type="VEuPathDB" id="FungiDB:UREG_05765"/>
<dbReference type="eggNOG" id="KOG2340">
    <property type="taxonomic scope" value="Eukaryota"/>
</dbReference>
<dbReference type="HOGENOM" id="CLU_018705_0_1_1"/>
<dbReference type="InParanoid" id="C4JTH6"/>
<dbReference type="OMA" id="PSIFGYH"/>
<dbReference type="OrthoDB" id="10264378at2759"/>
<dbReference type="Proteomes" id="UP000002058">
    <property type="component" value="Unassembled WGS sequence"/>
</dbReference>
<dbReference type="GO" id="GO:0005730">
    <property type="term" value="C:nucleolus"/>
    <property type="evidence" value="ECO:0007669"/>
    <property type="project" value="UniProtKB-SubCell"/>
</dbReference>
<dbReference type="GO" id="GO:0032040">
    <property type="term" value="C:small-subunit processome"/>
    <property type="evidence" value="ECO:0007669"/>
    <property type="project" value="EnsemblFungi"/>
</dbReference>
<dbReference type="GO" id="GO:0019843">
    <property type="term" value="F:rRNA binding"/>
    <property type="evidence" value="ECO:0007669"/>
    <property type="project" value="EnsemblFungi"/>
</dbReference>
<dbReference type="GO" id="GO:0034511">
    <property type="term" value="F:U3 snoRNA binding"/>
    <property type="evidence" value="ECO:0007669"/>
    <property type="project" value="EnsemblFungi"/>
</dbReference>
<dbReference type="GO" id="GO:0000462">
    <property type="term" value="P:maturation of SSU-rRNA from tricistronic rRNA transcript (SSU-rRNA, 5.8S rRNA, LSU-rRNA)"/>
    <property type="evidence" value="ECO:0007669"/>
    <property type="project" value="EnsemblFungi"/>
</dbReference>
<dbReference type="FunFam" id="3.40.50.300:FF:002356">
    <property type="entry name" value="U3 small nucleolar RNA-associated protein 25"/>
    <property type="match status" value="1"/>
</dbReference>
<dbReference type="Gene3D" id="3.40.50.300">
    <property type="entry name" value="P-loop containing nucleotide triphosphate hydrolases"/>
    <property type="match status" value="1"/>
</dbReference>
<dbReference type="InterPro" id="IPR027417">
    <property type="entry name" value="P-loop_NTPase"/>
</dbReference>
<dbReference type="InterPro" id="IPR010678">
    <property type="entry name" value="UTP25"/>
</dbReference>
<dbReference type="InterPro" id="IPR053939">
    <property type="entry name" value="UTP25_C"/>
</dbReference>
<dbReference type="InterPro" id="IPR053940">
    <property type="entry name" value="UTP25_NTPase-like"/>
</dbReference>
<dbReference type="PANTHER" id="PTHR12933">
    <property type="entry name" value="ORF PROTEIN-RELATED"/>
    <property type="match status" value="1"/>
</dbReference>
<dbReference type="PANTHER" id="PTHR12933:SF0">
    <property type="entry name" value="U3 SMALL NUCLEOLAR RNA-ASSOCIATED PROTEIN 25 HOMOLOG"/>
    <property type="match status" value="1"/>
</dbReference>
<dbReference type="Pfam" id="PF06862">
    <property type="entry name" value="Utp25_C"/>
    <property type="match status" value="1"/>
</dbReference>
<dbReference type="Pfam" id="PF22916">
    <property type="entry name" value="UTP25_NTPase-like"/>
    <property type="match status" value="1"/>
</dbReference>
<dbReference type="SUPFAM" id="SSF52540">
    <property type="entry name" value="P-loop containing nucleoside triphosphate hydrolases"/>
    <property type="match status" value="1"/>
</dbReference>
<feature type="chain" id="PRO_0000408143" description="U3 small nucleolar RNA-associated protein 25">
    <location>
        <begin position="1"/>
        <end position="715"/>
    </location>
</feature>
<feature type="region of interest" description="Disordered" evidence="2">
    <location>
        <begin position="1"/>
        <end position="166"/>
    </location>
</feature>
<feature type="compositionally biased region" description="Basic and acidic residues" evidence="2">
    <location>
        <begin position="18"/>
        <end position="34"/>
    </location>
</feature>
<feature type="compositionally biased region" description="Basic residues" evidence="2">
    <location>
        <begin position="88"/>
        <end position="99"/>
    </location>
</feature>
<feature type="compositionally biased region" description="Acidic residues" evidence="2">
    <location>
        <begin position="131"/>
        <end position="153"/>
    </location>
</feature>
<evidence type="ECO:0000250" key="1"/>
<evidence type="ECO:0000256" key="2">
    <source>
        <dbReference type="SAM" id="MobiDB-lite"/>
    </source>
</evidence>
<evidence type="ECO:0000305" key="3"/>
<proteinExistence type="inferred from homology"/>